<name>MED21_DICDI</name>
<reference key="1">
    <citation type="journal article" date="2005" name="Nature">
        <title>The genome of the social amoeba Dictyostelium discoideum.</title>
        <authorList>
            <person name="Eichinger L."/>
            <person name="Pachebat J.A."/>
            <person name="Gloeckner G."/>
            <person name="Rajandream M.A."/>
            <person name="Sucgang R."/>
            <person name="Berriman M."/>
            <person name="Song J."/>
            <person name="Olsen R."/>
            <person name="Szafranski K."/>
            <person name="Xu Q."/>
            <person name="Tunggal B."/>
            <person name="Kummerfeld S."/>
            <person name="Madera M."/>
            <person name="Konfortov B.A."/>
            <person name="Rivero F."/>
            <person name="Bankier A.T."/>
            <person name="Lehmann R."/>
            <person name="Hamlin N."/>
            <person name="Davies R."/>
            <person name="Gaudet P."/>
            <person name="Fey P."/>
            <person name="Pilcher K."/>
            <person name="Chen G."/>
            <person name="Saunders D."/>
            <person name="Sodergren E.J."/>
            <person name="Davis P."/>
            <person name="Kerhornou A."/>
            <person name="Nie X."/>
            <person name="Hall N."/>
            <person name="Anjard C."/>
            <person name="Hemphill L."/>
            <person name="Bason N."/>
            <person name="Farbrother P."/>
            <person name="Desany B."/>
            <person name="Just E."/>
            <person name="Morio T."/>
            <person name="Rost R."/>
            <person name="Churcher C.M."/>
            <person name="Cooper J."/>
            <person name="Haydock S."/>
            <person name="van Driessche N."/>
            <person name="Cronin A."/>
            <person name="Goodhead I."/>
            <person name="Muzny D.M."/>
            <person name="Mourier T."/>
            <person name="Pain A."/>
            <person name="Lu M."/>
            <person name="Harper D."/>
            <person name="Lindsay R."/>
            <person name="Hauser H."/>
            <person name="James K.D."/>
            <person name="Quiles M."/>
            <person name="Madan Babu M."/>
            <person name="Saito T."/>
            <person name="Buchrieser C."/>
            <person name="Wardroper A."/>
            <person name="Felder M."/>
            <person name="Thangavelu M."/>
            <person name="Johnson D."/>
            <person name="Knights A."/>
            <person name="Loulseged H."/>
            <person name="Mungall K.L."/>
            <person name="Oliver K."/>
            <person name="Price C."/>
            <person name="Quail M.A."/>
            <person name="Urushihara H."/>
            <person name="Hernandez J."/>
            <person name="Rabbinowitsch E."/>
            <person name="Steffen D."/>
            <person name="Sanders M."/>
            <person name="Ma J."/>
            <person name="Kohara Y."/>
            <person name="Sharp S."/>
            <person name="Simmonds M.N."/>
            <person name="Spiegler S."/>
            <person name="Tivey A."/>
            <person name="Sugano S."/>
            <person name="White B."/>
            <person name="Walker D."/>
            <person name="Woodward J.R."/>
            <person name="Winckler T."/>
            <person name="Tanaka Y."/>
            <person name="Shaulsky G."/>
            <person name="Schleicher M."/>
            <person name="Weinstock G.M."/>
            <person name="Rosenthal A."/>
            <person name="Cox E.C."/>
            <person name="Chisholm R.L."/>
            <person name="Gibbs R.A."/>
            <person name="Loomis W.F."/>
            <person name="Platzer M."/>
            <person name="Kay R.R."/>
            <person name="Williams J.G."/>
            <person name="Dear P.H."/>
            <person name="Noegel A.A."/>
            <person name="Barrell B.G."/>
            <person name="Kuspa A."/>
        </authorList>
    </citation>
    <scope>NUCLEOTIDE SEQUENCE [LARGE SCALE GENOMIC DNA]</scope>
    <source>
        <strain>AX4</strain>
    </source>
</reference>
<reference key="2">
    <citation type="journal article" date="2008" name="Nucleic Acids Res.">
        <title>Comparative genomics supports a deep evolutionary origin for the large, four-module transcriptional mediator complex.</title>
        <authorList>
            <person name="Bourbon H.-M."/>
        </authorList>
    </citation>
    <scope>NOMENCLATURE</scope>
</reference>
<proteinExistence type="inferred from homology"/>
<feature type="chain" id="PRO_0000388658" description="Putative mediator of RNA polymerase II transcription subunit 21">
    <location>
        <begin position="1"/>
        <end position="197"/>
    </location>
</feature>
<feature type="region of interest" description="Disordered" evidence="3">
    <location>
        <begin position="29"/>
        <end position="110"/>
    </location>
</feature>
<feature type="coiled-coil region" evidence="2">
    <location>
        <begin position="38"/>
        <end position="101"/>
    </location>
</feature>
<feature type="compositionally biased region" description="Low complexity" evidence="3">
    <location>
        <begin position="37"/>
        <end position="68"/>
    </location>
</feature>
<feature type="compositionally biased region" description="Pro residues" evidence="3">
    <location>
        <begin position="69"/>
        <end position="78"/>
    </location>
</feature>
<feature type="compositionally biased region" description="Low complexity" evidence="3">
    <location>
        <begin position="79"/>
        <end position="104"/>
    </location>
</feature>
<dbReference type="EMBL" id="AAFI02000139">
    <property type="protein sequence ID" value="EAL62756.1"/>
    <property type="molecule type" value="Genomic_DNA"/>
</dbReference>
<dbReference type="RefSeq" id="XP_636267.1">
    <property type="nucleotide sequence ID" value="XM_631175.1"/>
</dbReference>
<dbReference type="SMR" id="Q54HN4"/>
<dbReference type="FunCoup" id="Q54HN4">
    <property type="interactions" value="489"/>
</dbReference>
<dbReference type="STRING" id="44689.Q54HN4"/>
<dbReference type="PaxDb" id="44689-DDB0266929"/>
<dbReference type="EnsemblProtists" id="EAL62756">
    <property type="protein sequence ID" value="EAL62756"/>
    <property type="gene ID" value="DDB_G0289339"/>
</dbReference>
<dbReference type="GeneID" id="8627086"/>
<dbReference type="KEGG" id="ddi:DDB_G0289339"/>
<dbReference type="dictyBase" id="DDB_G0289339">
    <property type="gene designation" value="med21"/>
</dbReference>
<dbReference type="VEuPathDB" id="AmoebaDB:DDB_G0289339"/>
<dbReference type="eggNOG" id="ENOG502RI3X">
    <property type="taxonomic scope" value="Eukaryota"/>
</dbReference>
<dbReference type="HOGENOM" id="CLU_1386431_0_0_1"/>
<dbReference type="InParanoid" id="Q54HN4"/>
<dbReference type="OMA" id="YVFGTCI"/>
<dbReference type="PRO" id="PR:Q54HN4"/>
<dbReference type="Proteomes" id="UP000002195">
    <property type="component" value="Chromosome 5"/>
</dbReference>
<dbReference type="GO" id="GO:0016592">
    <property type="term" value="C:mediator complex"/>
    <property type="evidence" value="ECO:0000250"/>
    <property type="project" value="dictyBase"/>
</dbReference>
<dbReference type="GO" id="GO:0003712">
    <property type="term" value="F:transcription coregulator activity"/>
    <property type="evidence" value="ECO:0000318"/>
    <property type="project" value="GO_Central"/>
</dbReference>
<dbReference type="GO" id="GO:0006357">
    <property type="term" value="P:regulation of transcription by RNA polymerase II"/>
    <property type="evidence" value="ECO:0000250"/>
    <property type="project" value="dictyBase"/>
</dbReference>
<dbReference type="Gene3D" id="6.10.280.10">
    <property type="entry name" value="Mediator complex, subunit Med21"/>
    <property type="match status" value="1"/>
</dbReference>
<dbReference type="InterPro" id="IPR037212">
    <property type="entry name" value="Med7/Med21-like"/>
</dbReference>
<dbReference type="InterPro" id="IPR021384">
    <property type="entry name" value="Mediator_Med21"/>
</dbReference>
<dbReference type="PANTHER" id="PTHR13381:SF0">
    <property type="entry name" value="MEDIATOR OF RNA POLYMERASE II TRANSCRIPTION SUBUNIT 21"/>
    <property type="match status" value="1"/>
</dbReference>
<dbReference type="PANTHER" id="PTHR13381">
    <property type="entry name" value="RNA POLYMERASE II HOLOENZYME COMPONENT SRB7"/>
    <property type="match status" value="1"/>
</dbReference>
<dbReference type="Pfam" id="PF11221">
    <property type="entry name" value="Med21"/>
    <property type="match status" value="1"/>
</dbReference>
<dbReference type="SUPFAM" id="SSF140718">
    <property type="entry name" value="Mediator hinge subcomplex-like"/>
    <property type="match status" value="1"/>
</dbReference>
<comment type="function">
    <text evidence="1">Component of the Mediator complex, a coactivator involved in the regulated transcription of nearly all RNA polymerase II-dependent genes. Mediator functions as a bridge to convey information from gene-specific regulatory proteins to the basal RNA polymerase II transcription machinery. Mediator is recruited to promoters by direct interactions with regulatory proteins and serves as a scaffold for the assembly of a functional preinitiation complex with RNA polymerase II and the general transcription factors (By similarity).</text>
</comment>
<comment type="subunit">
    <text evidence="1">Component of the Mediator complex.</text>
</comment>
<comment type="subcellular location">
    <subcellularLocation>
        <location evidence="4">Nucleus</location>
    </subcellularLocation>
</comment>
<comment type="similarity">
    <text evidence="4">Belongs to the Mediator complex subunit 21 family.</text>
</comment>
<keyword id="KW-0010">Activator</keyword>
<keyword id="KW-0175">Coiled coil</keyword>
<keyword id="KW-0539">Nucleus</keyword>
<keyword id="KW-1185">Reference proteome</keyword>
<keyword id="KW-0804">Transcription</keyword>
<keyword id="KW-0805">Transcription regulation</keyword>
<evidence type="ECO:0000250" key="1"/>
<evidence type="ECO:0000255" key="2"/>
<evidence type="ECO:0000256" key="3">
    <source>
        <dbReference type="SAM" id="MobiDB-lite"/>
    </source>
</evidence>
<evidence type="ECO:0000305" key="4"/>
<accession>Q54HN4</accession>
<organism>
    <name type="scientific">Dictyostelium discoideum</name>
    <name type="common">Social amoeba</name>
    <dbReference type="NCBI Taxonomy" id="44689"/>
    <lineage>
        <taxon>Eukaryota</taxon>
        <taxon>Amoebozoa</taxon>
        <taxon>Evosea</taxon>
        <taxon>Eumycetozoa</taxon>
        <taxon>Dictyostelia</taxon>
        <taxon>Dictyosteliales</taxon>
        <taxon>Dictyosteliaceae</taxon>
        <taxon>Dictyostelium</taxon>
    </lineage>
</organism>
<gene>
    <name type="primary">med21</name>
    <name type="ORF">DDB_G0289339</name>
</gene>
<protein>
    <recommendedName>
        <fullName>Putative mediator of RNA polymerase II transcription subunit 21</fullName>
    </recommendedName>
    <alternativeName>
        <fullName>Putative mediator complex subunit 21</fullName>
    </alternativeName>
</protein>
<sequence>MDLITQLQDKLDHLLYVFGTCIGVLQRDAPPSFFNNPQNQQQQQQQQQQQQQQQQQQQQQQNPQTQQQLPPPPPPPPQQQQQQQQQQQQQQQQQQQQQQQQPQPTEEWDAPSKMALQVIETSKVIESYIEKLPGFDKTEDQQYEDLKNLNTQSKQVSNELLSSRRDAIELLKMVKESILYISEESKNEEIDQQPMQQ</sequence>